<proteinExistence type="inferred from homology"/>
<dbReference type="EC" id="2.7.1.33" evidence="1"/>
<dbReference type="EMBL" id="AP008955">
    <property type="protein sequence ID" value="BAH41111.1"/>
    <property type="molecule type" value="Genomic_DNA"/>
</dbReference>
<dbReference type="RefSeq" id="WP_012683904.1">
    <property type="nucleotide sequence ID" value="NC_012491.1"/>
</dbReference>
<dbReference type="SMR" id="C0ZHH0"/>
<dbReference type="STRING" id="358681.BBR47_01340"/>
<dbReference type="KEGG" id="bbe:BBR47_01340"/>
<dbReference type="eggNOG" id="COG1521">
    <property type="taxonomic scope" value="Bacteria"/>
</dbReference>
<dbReference type="HOGENOM" id="CLU_066627_1_0_9"/>
<dbReference type="UniPathway" id="UPA00241">
    <property type="reaction ID" value="UER00352"/>
</dbReference>
<dbReference type="Proteomes" id="UP000001877">
    <property type="component" value="Chromosome"/>
</dbReference>
<dbReference type="GO" id="GO:0005737">
    <property type="term" value="C:cytoplasm"/>
    <property type="evidence" value="ECO:0007669"/>
    <property type="project" value="UniProtKB-SubCell"/>
</dbReference>
<dbReference type="GO" id="GO:0005524">
    <property type="term" value="F:ATP binding"/>
    <property type="evidence" value="ECO:0007669"/>
    <property type="project" value="UniProtKB-UniRule"/>
</dbReference>
<dbReference type="GO" id="GO:0046872">
    <property type="term" value="F:metal ion binding"/>
    <property type="evidence" value="ECO:0007669"/>
    <property type="project" value="UniProtKB-KW"/>
</dbReference>
<dbReference type="GO" id="GO:0004594">
    <property type="term" value="F:pantothenate kinase activity"/>
    <property type="evidence" value="ECO:0007669"/>
    <property type="project" value="UniProtKB-UniRule"/>
</dbReference>
<dbReference type="GO" id="GO:0015937">
    <property type="term" value="P:coenzyme A biosynthetic process"/>
    <property type="evidence" value="ECO:0007669"/>
    <property type="project" value="UniProtKB-UniRule"/>
</dbReference>
<dbReference type="CDD" id="cd24015">
    <property type="entry name" value="ASKHA_NBD_PanK-III"/>
    <property type="match status" value="1"/>
</dbReference>
<dbReference type="Gene3D" id="3.30.420.40">
    <property type="match status" value="2"/>
</dbReference>
<dbReference type="HAMAP" id="MF_01274">
    <property type="entry name" value="Pantothen_kinase_3"/>
    <property type="match status" value="1"/>
</dbReference>
<dbReference type="InterPro" id="IPR043129">
    <property type="entry name" value="ATPase_NBD"/>
</dbReference>
<dbReference type="InterPro" id="IPR004619">
    <property type="entry name" value="Type_III_PanK"/>
</dbReference>
<dbReference type="NCBIfam" id="TIGR00671">
    <property type="entry name" value="baf"/>
    <property type="match status" value="1"/>
</dbReference>
<dbReference type="NCBIfam" id="NF009843">
    <property type="entry name" value="PRK13318.1-1"/>
    <property type="match status" value="1"/>
</dbReference>
<dbReference type="NCBIfam" id="NF009848">
    <property type="entry name" value="PRK13318.1-6"/>
    <property type="match status" value="1"/>
</dbReference>
<dbReference type="NCBIfam" id="NF009855">
    <property type="entry name" value="PRK13321.1"/>
    <property type="match status" value="1"/>
</dbReference>
<dbReference type="PANTHER" id="PTHR34265">
    <property type="entry name" value="TYPE III PANTOTHENATE KINASE"/>
    <property type="match status" value="1"/>
</dbReference>
<dbReference type="PANTHER" id="PTHR34265:SF1">
    <property type="entry name" value="TYPE III PANTOTHENATE KINASE"/>
    <property type="match status" value="1"/>
</dbReference>
<dbReference type="Pfam" id="PF03309">
    <property type="entry name" value="Pan_kinase"/>
    <property type="match status" value="1"/>
</dbReference>
<dbReference type="SUPFAM" id="SSF53067">
    <property type="entry name" value="Actin-like ATPase domain"/>
    <property type="match status" value="2"/>
</dbReference>
<name>COAX_BREBN</name>
<accession>C0ZHH0</accession>
<evidence type="ECO:0000255" key="1">
    <source>
        <dbReference type="HAMAP-Rule" id="MF_01274"/>
    </source>
</evidence>
<feature type="chain" id="PRO_1000165190" description="Type III pantothenate kinase">
    <location>
        <begin position="1"/>
        <end position="255"/>
    </location>
</feature>
<feature type="active site" description="Proton acceptor" evidence="1">
    <location>
        <position position="109"/>
    </location>
</feature>
<feature type="binding site" evidence="1">
    <location>
        <begin position="6"/>
        <end position="13"/>
    </location>
    <ligand>
        <name>ATP</name>
        <dbReference type="ChEBI" id="CHEBI:30616"/>
    </ligand>
</feature>
<feature type="binding site" evidence="1">
    <location>
        <position position="100"/>
    </location>
    <ligand>
        <name>substrate</name>
    </ligand>
</feature>
<feature type="binding site" evidence="1">
    <location>
        <begin position="107"/>
        <end position="110"/>
    </location>
    <ligand>
        <name>substrate</name>
    </ligand>
</feature>
<feature type="binding site" evidence="1">
    <location>
        <position position="129"/>
    </location>
    <ligand>
        <name>K(+)</name>
        <dbReference type="ChEBI" id="CHEBI:29103"/>
    </ligand>
</feature>
<feature type="binding site" evidence="1">
    <location>
        <position position="132"/>
    </location>
    <ligand>
        <name>ATP</name>
        <dbReference type="ChEBI" id="CHEBI:30616"/>
    </ligand>
</feature>
<feature type="binding site" evidence="1">
    <location>
        <position position="184"/>
    </location>
    <ligand>
        <name>substrate</name>
    </ligand>
</feature>
<keyword id="KW-0067">ATP-binding</keyword>
<keyword id="KW-0173">Coenzyme A biosynthesis</keyword>
<keyword id="KW-0963">Cytoplasm</keyword>
<keyword id="KW-0418">Kinase</keyword>
<keyword id="KW-0479">Metal-binding</keyword>
<keyword id="KW-0547">Nucleotide-binding</keyword>
<keyword id="KW-0630">Potassium</keyword>
<keyword id="KW-1185">Reference proteome</keyword>
<keyword id="KW-0808">Transferase</keyword>
<organism>
    <name type="scientific">Brevibacillus brevis (strain 47 / JCM 6285 / NBRC 100599)</name>
    <dbReference type="NCBI Taxonomy" id="358681"/>
    <lineage>
        <taxon>Bacteria</taxon>
        <taxon>Bacillati</taxon>
        <taxon>Bacillota</taxon>
        <taxon>Bacilli</taxon>
        <taxon>Bacillales</taxon>
        <taxon>Paenibacillaceae</taxon>
        <taxon>Brevibacillus</taxon>
    </lineage>
</organism>
<gene>
    <name evidence="1" type="primary">coaX</name>
    <name type="ordered locus">BBR47_01340</name>
</gene>
<protein>
    <recommendedName>
        <fullName evidence="1">Type III pantothenate kinase</fullName>
        <ecNumber evidence="1">2.7.1.33</ecNumber>
    </recommendedName>
    <alternativeName>
        <fullName evidence="1">PanK-III</fullName>
    </alternativeName>
    <alternativeName>
        <fullName evidence="1">Pantothenic acid kinase</fullName>
    </alternativeName>
</protein>
<comment type="function">
    <text evidence="1">Catalyzes the phosphorylation of pantothenate (Pan), the first step in CoA biosynthesis.</text>
</comment>
<comment type="catalytic activity">
    <reaction evidence="1">
        <text>(R)-pantothenate + ATP = (R)-4'-phosphopantothenate + ADP + H(+)</text>
        <dbReference type="Rhea" id="RHEA:16373"/>
        <dbReference type="ChEBI" id="CHEBI:10986"/>
        <dbReference type="ChEBI" id="CHEBI:15378"/>
        <dbReference type="ChEBI" id="CHEBI:29032"/>
        <dbReference type="ChEBI" id="CHEBI:30616"/>
        <dbReference type="ChEBI" id="CHEBI:456216"/>
        <dbReference type="EC" id="2.7.1.33"/>
    </reaction>
</comment>
<comment type="cofactor">
    <cofactor evidence="1">
        <name>NH4(+)</name>
        <dbReference type="ChEBI" id="CHEBI:28938"/>
    </cofactor>
    <cofactor evidence="1">
        <name>K(+)</name>
        <dbReference type="ChEBI" id="CHEBI:29103"/>
    </cofactor>
    <text evidence="1">A monovalent cation. Ammonium or potassium.</text>
</comment>
<comment type="pathway">
    <text evidence="1">Cofactor biosynthesis; coenzyme A biosynthesis; CoA from (R)-pantothenate: step 1/5.</text>
</comment>
<comment type="subunit">
    <text evidence="1">Homodimer.</text>
</comment>
<comment type="subcellular location">
    <subcellularLocation>
        <location evidence="1">Cytoplasm</location>
    </subcellularLocation>
</comment>
<comment type="similarity">
    <text evidence="1">Belongs to the type III pantothenate kinase family.</text>
</comment>
<sequence length="255" mass="27836">MLLVIDIGNSNIVLGLYEGDELQHHWRVSTDRNKTEDEYGMLVKSLFGSVGLGFEQVRGVIISSVVPPLNLTIERMCGKYMQQKALIIGPGIKTGLNIKYEYPREVGSDRIVNAVAAIHHYGAPLIVVDFGTATTFCYVDERAQYWGGAIAPGIGISTEALFTRAAKLPRIEITKPASVVGRNTIAAMQAGIFYGFVGQVEGIVRRIMDEYGTQPTVVATGGLASLFANETSCIHVVDQNLTLKGLRLIYERNQS</sequence>
<reference key="1">
    <citation type="submission" date="2005-03" db="EMBL/GenBank/DDBJ databases">
        <title>Brevibacillus brevis strain 47, complete genome.</title>
        <authorList>
            <person name="Hosoyama A."/>
            <person name="Yamada R."/>
            <person name="Hongo Y."/>
            <person name="Terui Y."/>
            <person name="Ankai A."/>
            <person name="Masuyama W."/>
            <person name="Sekiguchi M."/>
            <person name="Takeda T."/>
            <person name="Asano K."/>
            <person name="Ohji S."/>
            <person name="Ichikawa N."/>
            <person name="Narita S."/>
            <person name="Aoki N."/>
            <person name="Miura H."/>
            <person name="Matsushita S."/>
            <person name="Sekigawa T."/>
            <person name="Yamagata H."/>
            <person name="Yoshikawa H."/>
            <person name="Udaka S."/>
            <person name="Tanikawa S."/>
            <person name="Fujita N."/>
        </authorList>
    </citation>
    <scope>NUCLEOTIDE SEQUENCE [LARGE SCALE GENOMIC DNA]</scope>
    <source>
        <strain>47 / JCM 6285 / NBRC 100599</strain>
    </source>
</reference>